<comment type="function">
    <text>Serine/threonine-kinase of unknown function.</text>
</comment>
<comment type="catalytic activity">
    <reaction>
        <text>L-seryl-[protein] + ATP = O-phospho-L-seryl-[protein] + ADP + H(+)</text>
        <dbReference type="Rhea" id="RHEA:17989"/>
        <dbReference type="Rhea" id="RHEA-COMP:9863"/>
        <dbReference type="Rhea" id="RHEA-COMP:11604"/>
        <dbReference type="ChEBI" id="CHEBI:15378"/>
        <dbReference type="ChEBI" id="CHEBI:29999"/>
        <dbReference type="ChEBI" id="CHEBI:30616"/>
        <dbReference type="ChEBI" id="CHEBI:83421"/>
        <dbReference type="ChEBI" id="CHEBI:456216"/>
        <dbReference type="EC" id="2.7.11.1"/>
    </reaction>
</comment>
<comment type="catalytic activity">
    <reaction>
        <text>L-threonyl-[protein] + ATP = O-phospho-L-threonyl-[protein] + ADP + H(+)</text>
        <dbReference type="Rhea" id="RHEA:46608"/>
        <dbReference type="Rhea" id="RHEA-COMP:11060"/>
        <dbReference type="Rhea" id="RHEA-COMP:11605"/>
        <dbReference type="ChEBI" id="CHEBI:15378"/>
        <dbReference type="ChEBI" id="CHEBI:30013"/>
        <dbReference type="ChEBI" id="CHEBI:30616"/>
        <dbReference type="ChEBI" id="CHEBI:61977"/>
        <dbReference type="ChEBI" id="CHEBI:456216"/>
        <dbReference type="EC" id="2.7.11.1"/>
    </reaction>
</comment>
<comment type="subunit">
    <text evidence="8">Interacts with TMK4/BARK1 (PubMed:23921992).</text>
</comment>
<comment type="interaction">
    <interactant intactId="EBI-16887868">
        <id>Q8LPS5</id>
    </interactant>
    <interactant intactId="EBI-20651225">
        <id>C0LGI5</id>
        <label>At1g69990</label>
    </interactant>
    <organismsDiffer>false</organismsDiffer>
    <experiments>2</experiments>
</comment>
<comment type="interaction">
    <interactant intactId="EBI-16887868">
        <id>Q8LPS5</id>
    </interactant>
    <interactant intactId="EBI-617138">
        <id>Q94F62</id>
        <label>BAK1</label>
    </interactant>
    <organismsDiffer>false</organismsDiffer>
    <experiments>4</experiments>
</comment>
<comment type="interaction">
    <interactant intactId="EBI-16887868">
        <id>Q8LPS5</id>
    </interactant>
    <interactant intactId="EBI-590903">
        <id>Q9ZWC8</id>
        <label>BRL1</label>
    </interactant>
    <organismsDiffer>false</organismsDiffer>
    <experiments>2</experiments>
</comment>
<comment type="interaction">
    <interactant intactId="EBI-16887868">
        <id>Q8LPS5</id>
    </interactant>
    <interactant intactId="EBI-20651413">
        <id>Q9LJF3</id>
        <label>BRL3</label>
    </interactant>
    <organismsDiffer>false</organismsDiffer>
    <experiments>2</experiments>
</comment>
<comment type="interaction">
    <interactant intactId="EBI-16887868">
        <id>Q8LPS5</id>
    </interactant>
    <interactant intactId="EBI-8801168">
        <id>C0LGT6</id>
        <label>EFR</label>
    </interactant>
    <organismsDiffer>false</organismsDiffer>
    <experiments>4</experiments>
</comment>
<comment type="interaction">
    <interactant intactId="EBI-16887868">
        <id>Q8LPS5</id>
    </interactant>
    <interactant intactId="EBI-16940407">
        <id>Q42371</id>
        <label>ERECTA</label>
    </interactant>
    <organismsDiffer>false</organismsDiffer>
    <experiments>3</experiments>
</comment>
<comment type="interaction">
    <interactant intactId="EBI-16887868">
        <id>Q8LPS5</id>
    </interactant>
    <interactant intactId="EBI-16895926">
        <id>Q6XAT2</id>
        <label>ERL2</label>
    </interactant>
    <organismsDiffer>false</organismsDiffer>
    <experiments>4</experiments>
</comment>
<comment type="interaction">
    <interactant intactId="EBI-16887868">
        <id>Q8LPS5</id>
    </interactant>
    <interactant intactId="EBI-16905069">
        <id>C0LGQ5</id>
        <label>GSO1</label>
    </interactant>
    <organismsDiffer>false</organismsDiffer>
    <experiments>2</experiments>
</comment>
<comment type="interaction">
    <interactant intactId="EBI-16887868">
        <id>Q8LPS5</id>
    </interactant>
    <interactant intactId="EBI-16904927">
        <id>C0LGX3</id>
        <label>HSL2</label>
    </interactant>
    <organismsDiffer>false</organismsDiffer>
    <experiments>2</experiments>
</comment>
<comment type="interaction">
    <interactant intactId="EBI-16887868">
        <id>Q8LPS5</id>
    </interactant>
    <interactant intactId="EBI-20651739">
        <id>Q9ZVD4</id>
        <label>LRR-RLK</label>
    </interactant>
    <organismsDiffer>false</organismsDiffer>
    <experiments>2</experiments>
</comment>
<comment type="interaction">
    <interactant intactId="EBI-16887868">
        <id>Q8LPS5</id>
    </interactant>
    <interactant intactId="EBI-1238953">
        <id>Q9ZRF9</id>
        <label>RPK1</label>
    </interactant>
    <organismsDiffer>false</organismsDiffer>
    <experiments>2</experiments>
</comment>
<comment type="interaction">
    <interactant intactId="EBI-16887868">
        <id>Q8LPS5</id>
    </interactant>
    <interactant intactId="EBI-6290483">
        <id>Q9SKG5</id>
        <label>SERK4</label>
    </interactant>
    <organismsDiffer>false</organismsDiffer>
    <experiments>4</experiments>
</comment>
<comment type="interaction">
    <interactant intactId="EBI-16887868">
        <id>Q8LPS5</id>
    </interactant>
    <interactant intactId="EBI-16887868">
        <id>Q8LPS5</id>
        <label>SERK5</label>
    </interactant>
    <organismsDiffer>false</organismsDiffer>
    <experiments>2</experiments>
</comment>
<comment type="subcellular location">
    <subcellularLocation>
        <location evidence="9">Cell membrane</location>
        <topology evidence="9">Single-pass type I membrane protein</topology>
    </subcellularLocation>
</comment>
<comment type="PTM">
    <text evidence="7">Autophosphorylated.</text>
</comment>
<comment type="similarity">
    <text evidence="5">Belongs to the protein kinase superfamily. Ser/Thr protein kinase family.</text>
</comment>
<comment type="sequence caution" evidence="9">
    <conflict type="erroneous gene model prediction">
        <sequence resource="EMBL-CDS" id="AAD28319"/>
    </conflict>
</comment>
<gene>
    <name type="primary">SERK5</name>
    <name type="ordered locus">At2g13800</name>
    <name type="ORF">F13J11.15</name>
</gene>
<proteinExistence type="evidence at protein level"/>
<evidence type="ECO:0000250" key="1">
    <source>
        <dbReference type="UniProtKB" id="Q94AG2"/>
    </source>
</evidence>
<evidence type="ECO:0000250" key="2">
    <source>
        <dbReference type="UniProtKB" id="Q94F62"/>
    </source>
</evidence>
<evidence type="ECO:0000250" key="3">
    <source>
        <dbReference type="UniProtKB" id="Q9LSI9"/>
    </source>
</evidence>
<evidence type="ECO:0000255" key="4"/>
<evidence type="ECO:0000255" key="5">
    <source>
        <dbReference type="PROSITE-ProRule" id="PRU00159"/>
    </source>
</evidence>
<evidence type="ECO:0000255" key="6">
    <source>
        <dbReference type="PROSITE-ProRule" id="PRU10027"/>
    </source>
</evidence>
<evidence type="ECO:0000269" key="7">
    <source>
    </source>
</evidence>
<evidence type="ECO:0000269" key="8">
    <source>
    </source>
</evidence>
<evidence type="ECO:0000305" key="9"/>
<dbReference type="EC" id="2.7.11.1"/>
<dbReference type="EMBL" id="FJ708692">
    <property type="protein sequence ID" value="ACN59287.1"/>
    <property type="molecule type" value="mRNA"/>
</dbReference>
<dbReference type="EMBL" id="AC006436">
    <property type="protein sequence ID" value="AAD28319.1"/>
    <property type="status" value="ALT_SEQ"/>
    <property type="molecule type" value="Genomic_DNA"/>
</dbReference>
<dbReference type="EMBL" id="CP002685">
    <property type="protein sequence ID" value="AEC06260.1"/>
    <property type="molecule type" value="Genomic_DNA"/>
</dbReference>
<dbReference type="EMBL" id="CP002685">
    <property type="protein sequence ID" value="ANM62036.1"/>
    <property type="molecule type" value="Genomic_DNA"/>
</dbReference>
<dbReference type="EMBL" id="AY094412">
    <property type="protein sequence ID" value="AAM19787.1"/>
    <property type="molecule type" value="mRNA"/>
</dbReference>
<dbReference type="EMBL" id="BT001116">
    <property type="protein sequence ID" value="AAN64507.1"/>
    <property type="molecule type" value="mRNA"/>
</dbReference>
<dbReference type="PIR" id="H84510">
    <property type="entry name" value="H84510"/>
</dbReference>
<dbReference type="RefSeq" id="NP_001318220.1">
    <property type="nucleotide sequence ID" value="NM_001335399.1"/>
</dbReference>
<dbReference type="RefSeq" id="NP_001324219.1">
    <property type="nucleotide sequence ID" value="NM_001335400.1"/>
</dbReference>
<dbReference type="RefSeq" id="NP_001324220.1">
    <property type="nucleotide sequence ID" value="NM_001335401.1"/>
</dbReference>
<dbReference type="RefSeq" id="NP_179000.3">
    <property type="nucleotide sequence ID" value="NM_126956.4"/>
</dbReference>
<dbReference type="SMR" id="Q8LPS5"/>
<dbReference type="BioGRID" id="1224">
    <property type="interactions" value="36"/>
</dbReference>
<dbReference type="FunCoup" id="Q8LPS5">
    <property type="interactions" value="6"/>
</dbReference>
<dbReference type="IntAct" id="Q8LPS5">
    <property type="interactions" value="46"/>
</dbReference>
<dbReference type="STRING" id="3702.Q8LPS5"/>
<dbReference type="GlyCosmos" id="Q8LPS5">
    <property type="glycosylation" value="6 sites, No reported glycans"/>
</dbReference>
<dbReference type="GlyGen" id="Q8LPS5">
    <property type="glycosylation" value="7 sites"/>
</dbReference>
<dbReference type="iPTMnet" id="Q8LPS5"/>
<dbReference type="PaxDb" id="3702-AT2G13800.1"/>
<dbReference type="ProteomicsDB" id="234485"/>
<dbReference type="EnsemblPlants" id="AT2G13800.1">
    <property type="protein sequence ID" value="AT2G13800.1"/>
    <property type="gene ID" value="AT2G13800"/>
</dbReference>
<dbReference type="EnsemblPlants" id="AT2G13800.3">
    <property type="protein sequence ID" value="AT2G13800.3"/>
    <property type="gene ID" value="AT2G13800"/>
</dbReference>
<dbReference type="GeneID" id="815863"/>
<dbReference type="Gramene" id="AT2G13800.1">
    <property type="protein sequence ID" value="AT2G13800.1"/>
    <property type="gene ID" value="AT2G13800"/>
</dbReference>
<dbReference type="Gramene" id="AT2G13800.3">
    <property type="protein sequence ID" value="AT2G13800.3"/>
    <property type="gene ID" value="AT2G13800"/>
</dbReference>
<dbReference type="KEGG" id="ath:AT2G13800"/>
<dbReference type="Araport" id="AT2G13800"/>
<dbReference type="TAIR" id="AT2G13800">
    <property type="gene designation" value="SERK5"/>
</dbReference>
<dbReference type="eggNOG" id="KOG1187">
    <property type="taxonomic scope" value="Eukaryota"/>
</dbReference>
<dbReference type="HOGENOM" id="CLU_000288_92_7_1"/>
<dbReference type="InParanoid" id="Q8LPS5"/>
<dbReference type="PhylomeDB" id="Q8LPS5"/>
<dbReference type="PRO" id="PR:Q8LPS5"/>
<dbReference type="Proteomes" id="UP000006548">
    <property type="component" value="Chromosome 2"/>
</dbReference>
<dbReference type="ExpressionAtlas" id="Q8LPS5">
    <property type="expression patterns" value="baseline and differential"/>
</dbReference>
<dbReference type="GO" id="GO:0005739">
    <property type="term" value="C:mitochondrion"/>
    <property type="evidence" value="ECO:0007005"/>
    <property type="project" value="TAIR"/>
</dbReference>
<dbReference type="GO" id="GO:0005886">
    <property type="term" value="C:plasma membrane"/>
    <property type="evidence" value="ECO:0007669"/>
    <property type="project" value="UniProtKB-SubCell"/>
</dbReference>
<dbReference type="GO" id="GO:0005524">
    <property type="term" value="F:ATP binding"/>
    <property type="evidence" value="ECO:0007669"/>
    <property type="project" value="UniProtKB-KW"/>
</dbReference>
<dbReference type="GO" id="GO:0042802">
    <property type="term" value="F:identical protein binding"/>
    <property type="evidence" value="ECO:0000353"/>
    <property type="project" value="IntAct"/>
</dbReference>
<dbReference type="GO" id="GO:0106310">
    <property type="term" value="F:protein serine kinase activity"/>
    <property type="evidence" value="ECO:0007669"/>
    <property type="project" value="RHEA"/>
</dbReference>
<dbReference type="GO" id="GO:0004675">
    <property type="term" value="F:transmembrane receptor protein serine/threonine kinase activity"/>
    <property type="evidence" value="ECO:0000250"/>
    <property type="project" value="TAIR"/>
</dbReference>
<dbReference type="GO" id="GO:0006468">
    <property type="term" value="P:protein phosphorylation"/>
    <property type="evidence" value="ECO:0000250"/>
    <property type="project" value="TAIR"/>
</dbReference>
<dbReference type="FunFam" id="3.30.200.20:FF:000015">
    <property type="entry name" value="Somatic embryogenesis receptor kinase 1"/>
    <property type="match status" value="1"/>
</dbReference>
<dbReference type="FunFam" id="3.80.10.10:FF:000024">
    <property type="entry name" value="Somatic embryogenesis receptor kinase 1"/>
    <property type="match status" value="1"/>
</dbReference>
<dbReference type="FunFam" id="1.10.510.10:FF:000016">
    <property type="entry name" value="Somatic embryogenesis receptor-like kinase 1"/>
    <property type="match status" value="1"/>
</dbReference>
<dbReference type="Gene3D" id="3.30.200.20">
    <property type="entry name" value="Phosphorylase Kinase, domain 1"/>
    <property type="match status" value="1"/>
</dbReference>
<dbReference type="Gene3D" id="3.80.10.10">
    <property type="entry name" value="Ribonuclease Inhibitor"/>
    <property type="match status" value="1"/>
</dbReference>
<dbReference type="Gene3D" id="1.10.510.10">
    <property type="entry name" value="Transferase(Phosphotransferase) domain 1"/>
    <property type="match status" value="1"/>
</dbReference>
<dbReference type="InterPro" id="IPR011009">
    <property type="entry name" value="Kinase-like_dom_sf"/>
</dbReference>
<dbReference type="InterPro" id="IPR001611">
    <property type="entry name" value="Leu-rich_rpt"/>
</dbReference>
<dbReference type="InterPro" id="IPR032675">
    <property type="entry name" value="LRR_dom_sf"/>
</dbReference>
<dbReference type="InterPro" id="IPR013210">
    <property type="entry name" value="LRR_N_plant-typ"/>
</dbReference>
<dbReference type="InterPro" id="IPR000719">
    <property type="entry name" value="Prot_kinase_dom"/>
</dbReference>
<dbReference type="InterPro" id="IPR017441">
    <property type="entry name" value="Protein_kinase_ATP_BS"/>
</dbReference>
<dbReference type="InterPro" id="IPR001245">
    <property type="entry name" value="Ser-Thr/Tyr_kinase_cat_dom"/>
</dbReference>
<dbReference type="InterPro" id="IPR008271">
    <property type="entry name" value="Ser/Thr_kinase_AS"/>
</dbReference>
<dbReference type="PANTHER" id="PTHR47988">
    <property type="entry name" value="SOMATIC EMBRYOGENESIS RECEPTOR KINASE 1"/>
    <property type="match status" value="1"/>
</dbReference>
<dbReference type="Pfam" id="PF00560">
    <property type="entry name" value="LRR_1"/>
    <property type="match status" value="4"/>
</dbReference>
<dbReference type="Pfam" id="PF08263">
    <property type="entry name" value="LRRNT_2"/>
    <property type="match status" value="1"/>
</dbReference>
<dbReference type="Pfam" id="PF07714">
    <property type="entry name" value="PK_Tyr_Ser-Thr"/>
    <property type="match status" value="1"/>
</dbReference>
<dbReference type="SMART" id="SM00220">
    <property type="entry name" value="S_TKc"/>
    <property type="match status" value="1"/>
</dbReference>
<dbReference type="SUPFAM" id="SSF52058">
    <property type="entry name" value="L domain-like"/>
    <property type="match status" value="1"/>
</dbReference>
<dbReference type="SUPFAM" id="SSF56112">
    <property type="entry name" value="Protein kinase-like (PK-like)"/>
    <property type="match status" value="1"/>
</dbReference>
<dbReference type="PROSITE" id="PS00107">
    <property type="entry name" value="PROTEIN_KINASE_ATP"/>
    <property type="match status" value="1"/>
</dbReference>
<dbReference type="PROSITE" id="PS50011">
    <property type="entry name" value="PROTEIN_KINASE_DOM"/>
    <property type="match status" value="1"/>
</dbReference>
<dbReference type="PROSITE" id="PS00108">
    <property type="entry name" value="PROTEIN_KINASE_ST"/>
    <property type="match status" value="1"/>
</dbReference>
<sequence length="601" mass="66981">MEHGSSRGFIWLILFLDFVSRVTGKTQVDALIALRSSLSSGDHTNNILQSWNATHVTPCSWFHVTCNTENSVTRLDLGSANLSGELVPQLAQLPNLQYLELFNNNITGEIPEELGDLMELVSLDLFANNISGPIPSSLGKLGKLRFLRLYNNSLSGEIPRSLTALPLDVLDISNNRLSGDIPVNGSFSQFTSMSFANNKLRPRPASPSPSPSGTSAAIVVGVAAGAALLFALAWWLRRKLQGHFLDVPAEEDPEVYLGQFKRFSLRELLVATEKFSKRNVLGKGRFGILYKGRLADDTLVAVKRLNEERTKGGELQFQTEVEMISMAVHRNLLRLRGFCMTPTERLLVYPYMANGSVASCLRERPEGNPALDWPKRKHIALGSARGLAYLHDHCDQKIIHLDVKAANILLDEEFEAVVGDFGLAKLMNYNDSHVTTAVRGTIGHIAPEYLSTGKSSEKTDVFGYGVMLLELITGQKAFDLARLANDDDIMLLDWVKEVLKEKKLESLVDAELEGKYVETEVEQLIQMALLCTQSSAMERPKMSEVVRMLEGDGLAERWEEWQKEEMPIHDFNYQAYPHAGTDWLIPYSNSLIENDYPSGPR</sequence>
<name>SERK5_ARATH</name>
<keyword id="KW-0067">ATP-binding</keyword>
<keyword id="KW-1003">Cell membrane</keyword>
<keyword id="KW-0325">Glycoprotein</keyword>
<keyword id="KW-0418">Kinase</keyword>
<keyword id="KW-0433">Leucine-rich repeat</keyword>
<keyword id="KW-0472">Membrane</keyword>
<keyword id="KW-0547">Nucleotide-binding</keyword>
<keyword id="KW-0597">Phosphoprotein</keyword>
<keyword id="KW-0675">Receptor</keyword>
<keyword id="KW-1185">Reference proteome</keyword>
<keyword id="KW-0677">Repeat</keyword>
<keyword id="KW-0723">Serine/threonine-protein kinase</keyword>
<keyword id="KW-0732">Signal</keyword>
<keyword id="KW-0808">Transferase</keyword>
<keyword id="KW-0812">Transmembrane</keyword>
<keyword id="KW-1133">Transmembrane helix</keyword>
<accession>Q8LPS5</accession>
<accession>C0LGK2</accession>
<accession>Q9SKG4</accession>
<organism>
    <name type="scientific">Arabidopsis thaliana</name>
    <name type="common">Mouse-ear cress</name>
    <dbReference type="NCBI Taxonomy" id="3702"/>
    <lineage>
        <taxon>Eukaryota</taxon>
        <taxon>Viridiplantae</taxon>
        <taxon>Streptophyta</taxon>
        <taxon>Embryophyta</taxon>
        <taxon>Tracheophyta</taxon>
        <taxon>Spermatophyta</taxon>
        <taxon>Magnoliopsida</taxon>
        <taxon>eudicotyledons</taxon>
        <taxon>Gunneridae</taxon>
        <taxon>Pentapetalae</taxon>
        <taxon>rosids</taxon>
        <taxon>malvids</taxon>
        <taxon>Brassicales</taxon>
        <taxon>Brassicaceae</taxon>
        <taxon>Camelineae</taxon>
        <taxon>Arabidopsis</taxon>
    </lineage>
</organism>
<feature type="signal peptide" evidence="4">
    <location>
        <begin position="1"/>
        <end position="24"/>
    </location>
</feature>
<feature type="chain" id="PRO_0000380727" description="Somatic embryogenesis receptor kinase 5">
    <location>
        <begin position="25"/>
        <end position="601"/>
    </location>
</feature>
<feature type="topological domain" description="Extracellular" evidence="4">
    <location>
        <begin position="25"/>
        <end position="215"/>
    </location>
</feature>
<feature type="transmembrane region" description="Helical" evidence="4">
    <location>
        <begin position="216"/>
        <end position="236"/>
    </location>
</feature>
<feature type="topological domain" description="Cytoplasmic" evidence="4">
    <location>
        <begin position="237"/>
        <end position="601"/>
    </location>
</feature>
<feature type="repeat" description="LRR 1">
    <location>
        <begin position="71"/>
        <end position="94"/>
    </location>
</feature>
<feature type="repeat" description="LRR 2">
    <location>
        <begin position="95"/>
        <end position="118"/>
    </location>
</feature>
<feature type="repeat" description="LRR 3">
    <location>
        <begin position="119"/>
        <end position="141"/>
    </location>
</feature>
<feature type="repeat" description="LRR 4">
    <location>
        <begin position="143"/>
        <end position="165"/>
    </location>
</feature>
<feature type="repeat" description="LRR 5">
    <location>
        <begin position="166"/>
        <end position="188"/>
    </location>
</feature>
<feature type="domain" description="Protein kinase" evidence="5">
    <location>
        <begin position="275"/>
        <end position="572"/>
    </location>
</feature>
<feature type="active site" description="Proton acceptor" evidence="5 6">
    <location>
        <position position="402"/>
    </location>
</feature>
<feature type="binding site" evidence="5">
    <location>
        <begin position="281"/>
        <end position="289"/>
    </location>
    <ligand>
        <name>ATP</name>
        <dbReference type="ChEBI" id="CHEBI:30616"/>
    </ligand>
</feature>
<feature type="binding site" evidence="5">
    <location>
        <position position="303"/>
    </location>
    <ligand>
        <name>ATP</name>
        <dbReference type="ChEBI" id="CHEBI:30616"/>
    </ligand>
</feature>
<feature type="modified residue" description="Phosphothreonine" evidence="3">
    <location>
        <position position="272"/>
    </location>
</feature>
<feature type="modified residue" description="Phosphothreonine" evidence="2">
    <location>
        <position position="298"/>
    </location>
</feature>
<feature type="modified residue" description="Phosphoserine" evidence="1">
    <location>
        <position position="356"/>
    </location>
</feature>
<feature type="modified residue" description="Phosphoserine" evidence="3">
    <location>
        <position position="359"/>
    </location>
</feature>
<feature type="modified residue" description="Phosphothreonine" evidence="2">
    <location>
        <position position="435"/>
    </location>
</feature>
<feature type="modified residue" description="Phosphothreonine" evidence="2">
    <location>
        <position position="436"/>
    </location>
</feature>
<feature type="modified residue" description="Phosphothreonine" evidence="7">
    <location>
        <position position="441"/>
    </location>
</feature>
<feature type="modified residue" description="Phosphotyrosine" evidence="1">
    <location>
        <position position="449"/>
    </location>
</feature>
<feature type="modified residue" description="Phosphoserine" evidence="1">
    <location>
        <position position="451"/>
    </location>
</feature>
<feature type="modified residue" description="Phosphothreonine" evidence="1">
    <location>
        <position position="452"/>
    </location>
</feature>
<feature type="modified residue" description="Phosphoserine" evidence="1">
    <location>
        <position position="456"/>
    </location>
</feature>
<feature type="modified residue" description="Phosphoserine" evidence="7">
    <location>
        <position position="506"/>
    </location>
</feature>
<feature type="modified residue" description="Phosphothreonine" evidence="1">
    <location>
        <position position="532"/>
    </location>
</feature>
<feature type="glycosylation site" description="N-linked (GlcNAc...) asparagine" evidence="4">
    <location>
        <position position="52"/>
    </location>
</feature>
<feature type="glycosylation site" description="N-linked (GlcNAc...) asparagine" evidence="4">
    <location>
        <position position="81"/>
    </location>
</feature>
<feature type="glycosylation site" description="N-linked (GlcNAc...) asparagine" evidence="4">
    <location>
        <position position="105"/>
    </location>
</feature>
<feature type="glycosylation site" description="N-linked (GlcNAc...) asparagine" evidence="4">
    <location>
        <position position="129"/>
    </location>
</feature>
<feature type="glycosylation site" description="N-linked (GlcNAc...) asparagine" evidence="4">
    <location>
        <position position="151"/>
    </location>
</feature>
<feature type="glycosylation site" description="N-linked (GlcNAc...) asparagine" evidence="4">
    <location>
        <position position="184"/>
    </location>
</feature>
<protein>
    <recommendedName>
        <fullName>Somatic embryogenesis receptor kinase 5</fullName>
        <shortName>AtSERK5</shortName>
        <ecNumber>2.7.11.1</ecNumber>
    </recommendedName>
    <alternativeName>
        <fullName>Somatic embryogenesis receptor-like kinase 5</fullName>
    </alternativeName>
</protein>
<reference key="1">
    <citation type="journal article" date="2010" name="BMC Genomics">
        <title>Genome-wide cloning and sequence analysis of leucine-rich repeat receptor-like protein kinase genes in Arabidopsis thaliana.</title>
        <authorList>
            <person name="Gou X."/>
            <person name="He K."/>
            <person name="Yang H."/>
            <person name="Yuan T."/>
            <person name="Lin H."/>
            <person name="Clouse S.D."/>
            <person name="Li J."/>
        </authorList>
    </citation>
    <scope>NUCLEOTIDE SEQUENCE [MRNA]</scope>
    <source>
        <strain>cv. Columbia</strain>
    </source>
</reference>
<reference key="2">
    <citation type="journal article" date="1999" name="Nature">
        <title>Sequence and analysis of chromosome 2 of the plant Arabidopsis thaliana.</title>
        <authorList>
            <person name="Lin X."/>
            <person name="Kaul S."/>
            <person name="Rounsley S.D."/>
            <person name="Shea T.P."/>
            <person name="Benito M.-I."/>
            <person name="Town C.D."/>
            <person name="Fujii C.Y."/>
            <person name="Mason T.M."/>
            <person name="Bowman C.L."/>
            <person name="Barnstead M.E."/>
            <person name="Feldblyum T.V."/>
            <person name="Buell C.R."/>
            <person name="Ketchum K.A."/>
            <person name="Lee J.J."/>
            <person name="Ronning C.M."/>
            <person name="Koo H.L."/>
            <person name="Moffat K.S."/>
            <person name="Cronin L.A."/>
            <person name="Shen M."/>
            <person name="Pai G."/>
            <person name="Van Aken S."/>
            <person name="Umayam L."/>
            <person name="Tallon L.J."/>
            <person name="Gill J.E."/>
            <person name="Adams M.D."/>
            <person name="Carrera A.J."/>
            <person name="Creasy T.H."/>
            <person name="Goodman H.M."/>
            <person name="Somerville C.R."/>
            <person name="Copenhaver G.P."/>
            <person name="Preuss D."/>
            <person name="Nierman W.C."/>
            <person name="White O."/>
            <person name="Eisen J.A."/>
            <person name="Salzberg S.L."/>
            <person name="Fraser C.M."/>
            <person name="Venter J.C."/>
        </authorList>
    </citation>
    <scope>NUCLEOTIDE SEQUENCE [LARGE SCALE GENOMIC DNA]</scope>
    <source>
        <strain>cv. Columbia</strain>
    </source>
</reference>
<reference key="3">
    <citation type="journal article" date="2017" name="Plant J.">
        <title>Araport11: a complete reannotation of the Arabidopsis thaliana reference genome.</title>
        <authorList>
            <person name="Cheng C.Y."/>
            <person name="Krishnakumar V."/>
            <person name="Chan A.P."/>
            <person name="Thibaud-Nissen F."/>
            <person name="Schobel S."/>
            <person name="Town C.D."/>
        </authorList>
    </citation>
    <scope>GENOME REANNOTATION</scope>
    <source>
        <strain>cv. Columbia</strain>
    </source>
</reference>
<reference key="4">
    <citation type="journal article" date="2003" name="Science">
        <title>Empirical analysis of transcriptional activity in the Arabidopsis genome.</title>
        <authorList>
            <person name="Yamada K."/>
            <person name="Lim J."/>
            <person name="Dale J.M."/>
            <person name="Chen H."/>
            <person name="Shinn P."/>
            <person name="Palm C.J."/>
            <person name="Southwick A.M."/>
            <person name="Wu H.C."/>
            <person name="Kim C.J."/>
            <person name="Nguyen M."/>
            <person name="Pham P.K."/>
            <person name="Cheuk R.F."/>
            <person name="Karlin-Newmann G."/>
            <person name="Liu S.X."/>
            <person name="Lam B."/>
            <person name="Sakano H."/>
            <person name="Wu T."/>
            <person name="Yu G."/>
            <person name="Miranda M."/>
            <person name="Quach H.L."/>
            <person name="Tripp M."/>
            <person name="Chang C.H."/>
            <person name="Lee J.M."/>
            <person name="Toriumi M.J."/>
            <person name="Chan M.M."/>
            <person name="Tang C.C."/>
            <person name="Onodera C.S."/>
            <person name="Deng J.M."/>
            <person name="Akiyama K."/>
            <person name="Ansari Y."/>
            <person name="Arakawa T."/>
            <person name="Banh J."/>
            <person name="Banno F."/>
            <person name="Bowser L."/>
            <person name="Brooks S.Y."/>
            <person name="Carninci P."/>
            <person name="Chao Q."/>
            <person name="Choy N."/>
            <person name="Enju A."/>
            <person name="Goldsmith A.D."/>
            <person name="Gurjal M."/>
            <person name="Hansen N.F."/>
            <person name="Hayashizaki Y."/>
            <person name="Johnson-Hopson C."/>
            <person name="Hsuan V.W."/>
            <person name="Iida K."/>
            <person name="Karnes M."/>
            <person name="Khan S."/>
            <person name="Koesema E."/>
            <person name="Ishida J."/>
            <person name="Jiang P.X."/>
            <person name="Jones T."/>
            <person name="Kawai J."/>
            <person name="Kamiya A."/>
            <person name="Meyers C."/>
            <person name="Nakajima M."/>
            <person name="Narusaka M."/>
            <person name="Seki M."/>
            <person name="Sakurai T."/>
            <person name="Satou M."/>
            <person name="Tamse R."/>
            <person name="Vaysberg M."/>
            <person name="Wallender E.K."/>
            <person name="Wong C."/>
            <person name="Yamamura Y."/>
            <person name="Yuan S."/>
            <person name="Shinozaki K."/>
            <person name="Davis R.W."/>
            <person name="Theologis A."/>
            <person name="Ecker J.R."/>
        </authorList>
    </citation>
    <scope>NUCLEOTIDE SEQUENCE [LARGE SCALE MRNA] OF 5-601</scope>
    <source>
        <strain>cv. Columbia</strain>
    </source>
</reference>
<reference key="5">
    <citation type="journal article" date="2001" name="Planta">
        <title>Molecular characterisation of two novel maize LRR receptor-like kinases, which belong to the SERK gene family.</title>
        <authorList>
            <person name="Baudino S."/>
            <person name="Hansen S."/>
            <person name="Brettschneider R."/>
            <person name="Hecht V.F.G."/>
            <person name="Dresselhaus T."/>
            <person name="Loerz H."/>
            <person name="Dumas C."/>
            <person name="Rogowsky P.M."/>
        </authorList>
    </citation>
    <scope>IDENTIFICATION</scope>
</reference>
<reference key="6">
    <citation type="journal article" date="2009" name="Proteomics">
        <title>Identification of in vitro phosphorylation sites in the Arabidopsis thaliana somatic embryogenesis receptor-like kinases.</title>
        <authorList>
            <person name="Karlova R."/>
            <person name="Boeren S."/>
            <person name="van Dongen W."/>
            <person name="Kwaaitaal M."/>
            <person name="Aker J."/>
            <person name="Vervoort J."/>
            <person name="de Vries S.C."/>
        </authorList>
    </citation>
    <scope>AUTOPHOSPHORYLATION</scope>
    <scope>PHOSPHORYLATION AT THR-441 AND SER-506</scope>
</reference>
<reference key="7">
    <citation type="journal article" date="2013" name="Plant Cell Physiol.">
        <title>Identification of Arabidopsis BAK1-associating receptor-like kinase 1 (BARK1) and characterization of its gene expression and brassinosteroid-regulated root phenotypes.</title>
        <authorList>
            <person name="Kim M.H."/>
            <person name="Kim Y."/>
            <person name="Kim J.W."/>
            <person name="Lee H.S."/>
            <person name="Lee W.S."/>
            <person name="Kim S.K."/>
            <person name="Wang Z.Y."/>
            <person name="Kim S.H."/>
        </authorList>
    </citation>
    <scope>INTERACTION WITH TMK4/BARK1</scope>
</reference>